<keyword id="KW-1079">Host G2/M cell cycle arrest by virus</keyword>
<keyword id="KW-1048">Host nucleus</keyword>
<keyword id="KW-0945">Host-virus interaction</keyword>
<keyword id="KW-1121">Modulation of host cell cycle by virus</keyword>
<keyword id="KW-1185">Reference proteome</keyword>
<sequence>MSTRHTQRTGGRISVRRNEARLAHARARARFDWLLLARGRPSKLYGYASRHRGELIHLPWPPCWCLELHHDPYRDARSATVWGHRWGWPATHVRPRCVQDCALDSCLYVCCGYGEKLQPVGFVKSYVTNSQLDTLRVLLVGKDGAVYVHHMRAARLCRLASSTTEFTRRGLQRDAVTYEEDLELPDQRMCGTNARHLFDVIAAAADEHNLLTVGGLCQTHAGVSCNLLETVGDPWTAVPAARMTLTVPQVQYRLWPEARRDLRRHLYAGHPLGPWLVCGVLSRERETQKPSPPIRTTVGNVPTPGPREVEIAWVVLTLAGPLLAFWPDTGKICRLANSFSTLWKMGPRAMRGHWTYSAPGRHLPGDAWPLCEHVRPQVGKLPRKRAYLD</sequence>
<evidence type="ECO:0000269" key="1">
    <source>
    </source>
</evidence>
<evidence type="ECO:0000269" key="2">
    <source>
    </source>
</evidence>
<evidence type="ECO:0000305" key="3"/>
<name>DR6_HHV6U</name>
<comment type="function">
    <text evidence="2">Inhibits the host G2/M cell-cycle progression in a p53-independent manner.</text>
</comment>
<comment type="subcellular location">
    <subcellularLocation>
        <location evidence="2">Host nucleus</location>
    </subcellularLocation>
</comment>
<comment type="domain">
    <text evidence="2">The N-terminus is involved in nuclear targeting.</text>
</comment>
<comment type="miscellaneous">
    <text evidence="1">The first DR6 exon is not required for propagation in cell culture (PubMed:20053742). Loss of a part of the DR region may occur in viruses propagated on cell cultures (PubMed:20053742).</text>
</comment>
<comment type="similarity">
    <text evidence="3">Belongs to the Roseolovirus DR6 family.</text>
</comment>
<gene>
    <name type="primary">DR6L</name>
</gene>
<gene>
    <name type="primary">DR6R</name>
</gene>
<organismHost>
    <name type="scientific">Homo sapiens</name>
    <name type="common">Human</name>
    <dbReference type="NCBI Taxonomy" id="9606"/>
</organismHost>
<proteinExistence type="evidence at protein level"/>
<dbReference type="EMBL" id="X83413">
    <property type="protein sequence ID" value="SPC53472.1"/>
    <property type="molecule type" value="Genomic_DNA"/>
</dbReference>
<dbReference type="EMBL" id="X83413">
    <property type="protein sequence ID" value="SPC53507.1"/>
    <property type="molecule type" value="Genomic_DNA"/>
</dbReference>
<dbReference type="Proteomes" id="UP000009295">
    <property type="component" value="Segment"/>
</dbReference>
<dbReference type="GO" id="GO:0042025">
    <property type="term" value="C:host cell nucleus"/>
    <property type="evidence" value="ECO:0007669"/>
    <property type="project" value="UniProtKB-SubCell"/>
</dbReference>
<dbReference type="GO" id="GO:0039592">
    <property type="term" value="P:symbiont-mediated arrest of host cell cycle during G2/M transition"/>
    <property type="evidence" value="ECO:0007669"/>
    <property type="project" value="UniProtKB-KW"/>
</dbReference>
<dbReference type="InterPro" id="IPR003360">
    <property type="entry name" value="US22-like"/>
</dbReference>
<dbReference type="Pfam" id="PF02393">
    <property type="entry name" value="US22"/>
    <property type="match status" value="1"/>
</dbReference>
<reference key="1">
    <citation type="journal article" date="1995" name="Virology">
        <title>The DNA sequence of human herpesvirus-6: structure, coding content, and genome evolution.</title>
        <authorList>
            <person name="Gompels U.A."/>
            <person name="Nicholas J."/>
            <person name="Lawrence G.L."/>
            <person name="Jones M."/>
            <person name="Thomson B.J."/>
            <person name="Martin M.E.D."/>
            <person name="Efstathiou S."/>
            <person name="Craxton M.A."/>
            <person name="Macaulay H.A."/>
        </authorList>
    </citation>
    <scope>NUCLEOTIDE SEQUENCE [LARGE SCALE GENOMIC DNA]</scope>
</reference>
<reference key="2">
    <citation type="journal article" date="2009" name="PLoS ONE">
        <title>Direct Repeat 6 from human herpesvirus-6B encodes a nuclear protein that forms a complex with the viral DNA processivity factor p41.</title>
        <authorList>
            <person name="Schleimann M.H."/>
            <person name="Moeller J.M."/>
            <person name="Kofod-Olsen E."/>
            <person name="Hoellsberg P."/>
        </authorList>
    </citation>
    <scope>SEQUENCE REVISION</scope>
</reference>
<reference key="3">
    <citation type="journal article" date="2010" name="J. Virol.">
        <title>The DR1 and DR6 first exons of human herpesvirus 6A are not required for virus replication in culture and are deleted in virus stocks that replicate well in T-cell lines.</title>
        <authorList>
            <person name="Borenstein R."/>
            <person name="Zeigerman H."/>
            <person name="Frenkel N."/>
        </authorList>
    </citation>
    <scope>CHARACTERIZATION</scope>
</reference>
<reference key="4">
    <citation type="journal article" date="2014" name="Virology">
        <title>The DR6 protein from human herpesvirus-6B induces p53-independent cell cycle arrest in G2/M.</title>
        <authorList>
            <person name="Schleimann M.H."/>
            <person name="Hoberg S."/>
            <person name="Solhoej Hansen A."/>
            <person name="Bundgaard B."/>
            <person name="Witt C.T."/>
            <person name="Kofod-Olsen E."/>
            <person name="Hoellsberg P."/>
        </authorList>
    </citation>
    <scope>FUNCTION</scope>
    <scope>DOMAIN</scope>
    <scope>SUBCELLULAR LOCATION</scope>
    <source>
        <strain>PL1</strain>
    </source>
</reference>
<protein>
    <recommendedName>
        <fullName evidence="3">G2/M cell-cycle inhibitor DR6</fullName>
    </recommendedName>
</protein>
<accession>Q89584</accession>
<accession>A0A2N9DYZ3</accession>
<feature type="chain" id="PRO_0000342566" description="G2/M cell-cycle inhibitor DR6">
    <location>
        <begin position="1"/>
        <end position="389"/>
    </location>
</feature>
<organism>
    <name type="scientific">Human herpesvirus 6A (strain Uganda-1102)</name>
    <name type="common">HHV-6 variant A</name>
    <name type="synonym">Human B lymphotropic virus</name>
    <dbReference type="NCBI Taxonomy" id="10370"/>
    <lineage>
        <taxon>Viruses</taxon>
        <taxon>Duplodnaviria</taxon>
        <taxon>Heunggongvirae</taxon>
        <taxon>Peploviricota</taxon>
        <taxon>Herviviricetes</taxon>
        <taxon>Herpesvirales</taxon>
        <taxon>Orthoherpesviridae</taxon>
        <taxon>Betaherpesvirinae</taxon>
        <taxon>Roseolovirus</taxon>
        <taxon>Roseolovirus humanbeta6a</taxon>
        <taxon>Human betaherpesvirus 6A</taxon>
    </lineage>
</organism>